<accession>Q95238</accession>
<sequence>MVHFTAEEKSTILSVWGKVNVEEAGGEALGRLLVVYPWTQRFFDNFGNLSSPSAIMGNPKVKAHGKKVLTSFGEAVKNMDNLKGAFAKLSELHCDKLHVDPENFKLLGNAMVIILATHFGKEFTPDVQAAWQKLVSGVATALAHKYH</sequence>
<organism>
    <name type="scientific">Propithecus verreauxi</name>
    <name type="common">White sifaka</name>
    <name type="synonym">Verreaux's sifaka</name>
    <dbReference type="NCBI Taxonomy" id="34825"/>
    <lineage>
        <taxon>Eukaryota</taxon>
        <taxon>Metazoa</taxon>
        <taxon>Chordata</taxon>
        <taxon>Craniata</taxon>
        <taxon>Vertebrata</taxon>
        <taxon>Euteleostomi</taxon>
        <taxon>Mammalia</taxon>
        <taxon>Eutheria</taxon>
        <taxon>Euarchontoglires</taxon>
        <taxon>Primates</taxon>
        <taxon>Strepsirrhini</taxon>
        <taxon>Lemuriformes</taxon>
        <taxon>Indriidae</taxon>
        <taxon>Propithecus</taxon>
    </lineage>
</organism>
<keyword id="KW-0349">Heme</keyword>
<keyword id="KW-0408">Iron</keyword>
<keyword id="KW-0479">Metal-binding</keyword>
<keyword id="KW-0561">Oxygen transport</keyword>
<keyword id="KW-0597">Phosphoprotein</keyword>
<keyword id="KW-0813">Transport</keyword>
<name>HBE_PROVE</name>
<comment type="function">
    <text>The epsilon chain is a beta-type chain of early mammalian embryonic hemoglobin.</text>
</comment>
<comment type="subunit">
    <text>Heterotetramer of two alpha chains and two epsilon chains in early embryonic hemoglobin Gower-2; two zeta chains and two epsilon chains in early embryonic hemoglobin Gower-1.</text>
</comment>
<comment type="tissue specificity">
    <text>Red blood cells.</text>
</comment>
<comment type="similarity">
    <text evidence="2">Belongs to the globin family.</text>
</comment>
<dbReference type="EMBL" id="U64618">
    <property type="protein sequence ID" value="AAB60785.1"/>
    <property type="molecule type" value="Genomic_DNA"/>
</dbReference>
<dbReference type="PIR" id="I61881">
    <property type="entry name" value="I61881"/>
</dbReference>
<dbReference type="SMR" id="Q95238"/>
<dbReference type="GO" id="GO:0072562">
    <property type="term" value="C:blood microparticle"/>
    <property type="evidence" value="ECO:0007669"/>
    <property type="project" value="TreeGrafter"/>
</dbReference>
<dbReference type="GO" id="GO:0031838">
    <property type="term" value="C:haptoglobin-hemoglobin complex"/>
    <property type="evidence" value="ECO:0007669"/>
    <property type="project" value="TreeGrafter"/>
</dbReference>
<dbReference type="GO" id="GO:0005833">
    <property type="term" value="C:hemoglobin complex"/>
    <property type="evidence" value="ECO:0007669"/>
    <property type="project" value="InterPro"/>
</dbReference>
<dbReference type="GO" id="GO:0031720">
    <property type="term" value="F:haptoglobin binding"/>
    <property type="evidence" value="ECO:0007669"/>
    <property type="project" value="TreeGrafter"/>
</dbReference>
<dbReference type="GO" id="GO:0020037">
    <property type="term" value="F:heme binding"/>
    <property type="evidence" value="ECO:0007669"/>
    <property type="project" value="InterPro"/>
</dbReference>
<dbReference type="GO" id="GO:0031721">
    <property type="term" value="F:hemoglobin alpha binding"/>
    <property type="evidence" value="ECO:0007669"/>
    <property type="project" value="TreeGrafter"/>
</dbReference>
<dbReference type="GO" id="GO:0046872">
    <property type="term" value="F:metal ion binding"/>
    <property type="evidence" value="ECO:0007669"/>
    <property type="project" value="UniProtKB-KW"/>
</dbReference>
<dbReference type="GO" id="GO:0043177">
    <property type="term" value="F:organic acid binding"/>
    <property type="evidence" value="ECO:0007669"/>
    <property type="project" value="TreeGrafter"/>
</dbReference>
<dbReference type="GO" id="GO:0019825">
    <property type="term" value="F:oxygen binding"/>
    <property type="evidence" value="ECO:0007669"/>
    <property type="project" value="InterPro"/>
</dbReference>
<dbReference type="GO" id="GO:0005344">
    <property type="term" value="F:oxygen carrier activity"/>
    <property type="evidence" value="ECO:0007669"/>
    <property type="project" value="UniProtKB-KW"/>
</dbReference>
<dbReference type="GO" id="GO:0004601">
    <property type="term" value="F:peroxidase activity"/>
    <property type="evidence" value="ECO:0007669"/>
    <property type="project" value="TreeGrafter"/>
</dbReference>
<dbReference type="GO" id="GO:0042744">
    <property type="term" value="P:hydrogen peroxide catabolic process"/>
    <property type="evidence" value="ECO:0007669"/>
    <property type="project" value="TreeGrafter"/>
</dbReference>
<dbReference type="CDD" id="cd08925">
    <property type="entry name" value="Hb-beta-like"/>
    <property type="match status" value="1"/>
</dbReference>
<dbReference type="FunFam" id="1.10.490.10:FF:000001">
    <property type="entry name" value="Hemoglobin subunit beta"/>
    <property type="match status" value="1"/>
</dbReference>
<dbReference type="Gene3D" id="1.10.490.10">
    <property type="entry name" value="Globins"/>
    <property type="match status" value="1"/>
</dbReference>
<dbReference type="InterPro" id="IPR000971">
    <property type="entry name" value="Globin"/>
</dbReference>
<dbReference type="InterPro" id="IPR009050">
    <property type="entry name" value="Globin-like_sf"/>
</dbReference>
<dbReference type="InterPro" id="IPR012292">
    <property type="entry name" value="Globin/Proto"/>
</dbReference>
<dbReference type="InterPro" id="IPR002337">
    <property type="entry name" value="Hemoglobin_b"/>
</dbReference>
<dbReference type="InterPro" id="IPR050056">
    <property type="entry name" value="Hemoglobin_oxygen_transport"/>
</dbReference>
<dbReference type="PANTHER" id="PTHR11442">
    <property type="entry name" value="HEMOGLOBIN FAMILY MEMBER"/>
    <property type="match status" value="1"/>
</dbReference>
<dbReference type="PANTHER" id="PTHR11442:SF7">
    <property type="entry name" value="HEMOGLOBIN SUBUNIT EPSILON"/>
    <property type="match status" value="1"/>
</dbReference>
<dbReference type="Pfam" id="PF00042">
    <property type="entry name" value="Globin"/>
    <property type="match status" value="1"/>
</dbReference>
<dbReference type="PRINTS" id="PR00814">
    <property type="entry name" value="BETAHAEM"/>
</dbReference>
<dbReference type="SUPFAM" id="SSF46458">
    <property type="entry name" value="Globin-like"/>
    <property type="match status" value="1"/>
</dbReference>
<dbReference type="PROSITE" id="PS01033">
    <property type="entry name" value="GLOBIN"/>
    <property type="match status" value="1"/>
</dbReference>
<proteinExistence type="evidence at transcript level"/>
<evidence type="ECO:0000250" key="1">
    <source>
        <dbReference type="UniProtKB" id="P02100"/>
    </source>
</evidence>
<evidence type="ECO:0000255" key="2">
    <source>
        <dbReference type="PROSITE-ProRule" id="PRU00238"/>
    </source>
</evidence>
<protein>
    <recommendedName>
        <fullName>Hemoglobin subunit epsilon</fullName>
    </recommendedName>
    <alternativeName>
        <fullName>Epsilon-globin</fullName>
    </alternativeName>
    <alternativeName>
        <fullName>Hemoglobin epsilon chain</fullName>
    </alternativeName>
</protein>
<feature type="chain" id="PRO_0000053225" description="Hemoglobin subunit epsilon">
    <location>
        <begin position="1"/>
        <end position="147"/>
    </location>
</feature>
<feature type="domain" description="Globin" evidence="2">
    <location>
        <begin position="3"/>
        <end position="147"/>
    </location>
</feature>
<feature type="binding site" description="distal binding residue" evidence="2">
    <location>
        <position position="64"/>
    </location>
    <ligand>
        <name>heme b</name>
        <dbReference type="ChEBI" id="CHEBI:60344"/>
    </ligand>
    <ligandPart>
        <name>Fe</name>
        <dbReference type="ChEBI" id="CHEBI:18248"/>
    </ligandPart>
</feature>
<feature type="binding site" description="proximal binding residue" evidence="2">
    <location>
        <position position="93"/>
    </location>
    <ligand>
        <name>heme b</name>
        <dbReference type="ChEBI" id="CHEBI:60344"/>
    </ligand>
    <ligandPart>
        <name>Fe</name>
        <dbReference type="ChEBI" id="CHEBI:18248"/>
    </ligandPart>
</feature>
<feature type="modified residue" description="Phosphoserine" evidence="1">
    <location>
        <position position="14"/>
    </location>
</feature>
<feature type="modified residue" description="Phosphoserine" evidence="1">
    <location>
        <position position="51"/>
    </location>
</feature>
<gene>
    <name type="primary">HBE1</name>
</gene>
<reference key="1">
    <citation type="journal article" date="1997" name="Int. J. Primatol.">
        <title>Phylogeny and evolution of selected primates as determined by sequences of the epsilon globin locus and 5' flanking regions.</title>
        <authorList>
            <person name="Porter C.A."/>
            <person name="Page S.L."/>
            <person name="Czelusniak J."/>
            <person name="Schneider H."/>
            <person name="Schneider M.P.C."/>
            <person name="Sampaio I."/>
            <person name="Goodman M."/>
        </authorList>
    </citation>
    <scope>NUCLEOTIDE SEQUENCE [GENOMIC DNA]</scope>
</reference>